<accession>B0KBQ3</accession>
<organism>
    <name type="scientific">Thermoanaerobacter pseudethanolicus (strain ATCC 33223 / 39E)</name>
    <name type="common">Clostridium thermohydrosulfuricum</name>
    <dbReference type="NCBI Taxonomy" id="340099"/>
    <lineage>
        <taxon>Bacteria</taxon>
        <taxon>Bacillati</taxon>
        <taxon>Bacillota</taxon>
        <taxon>Clostridia</taxon>
        <taxon>Thermoanaerobacterales</taxon>
        <taxon>Thermoanaerobacteraceae</taxon>
        <taxon>Thermoanaerobacter</taxon>
    </lineage>
</organism>
<sequence>MNYKDAGVNIDEGNKLVEMIKPIAKKTLTDNVLEGIGGFAALFEIKNYKNPVIVSSTDGVGTKLKIAFMMDKHDTVGIDLVAMCVNDIIVTGAKPLFFLDYFATGKLKSEVAVEVIKGIAEGCKIAGCALIGGETAELPGFYKEGEYDLAGFCVGIVEKEELIDTKSIKEGDAIIGLASSGIHSNGYSLVRKVFFEKNNFSVKDFIPELGMNLGDALLTPTKIYVKSIEALKELKIKGMAHITGGGFIDNIPRILRKSIAAKINKGSWKIPTIFNLIQRLGDIEEREMYRTFNMGIGMVVIVDPSDVDKALEKLNGIGEKAYVIGEIVESEGGVIL</sequence>
<proteinExistence type="inferred from homology"/>
<dbReference type="EC" id="6.3.3.1" evidence="1"/>
<dbReference type="EMBL" id="CP000924">
    <property type="protein sequence ID" value="ABY95348.1"/>
    <property type="molecule type" value="Genomic_DNA"/>
</dbReference>
<dbReference type="RefSeq" id="WP_003866806.1">
    <property type="nucleotide sequence ID" value="NC_010321.1"/>
</dbReference>
<dbReference type="SMR" id="B0KBQ3"/>
<dbReference type="STRING" id="340099.Teth39_1711"/>
<dbReference type="KEGG" id="tpd:Teth39_1711"/>
<dbReference type="eggNOG" id="COG0150">
    <property type="taxonomic scope" value="Bacteria"/>
</dbReference>
<dbReference type="HOGENOM" id="CLU_047116_0_0_9"/>
<dbReference type="UniPathway" id="UPA00074">
    <property type="reaction ID" value="UER00129"/>
</dbReference>
<dbReference type="Proteomes" id="UP000002156">
    <property type="component" value="Chromosome"/>
</dbReference>
<dbReference type="GO" id="GO:0005829">
    <property type="term" value="C:cytosol"/>
    <property type="evidence" value="ECO:0007669"/>
    <property type="project" value="TreeGrafter"/>
</dbReference>
<dbReference type="GO" id="GO:0005524">
    <property type="term" value="F:ATP binding"/>
    <property type="evidence" value="ECO:0007669"/>
    <property type="project" value="UniProtKB-KW"/>
</dbReference>
<dbReference type="GO" id="GO:0004637">
    <property type="term" value="F:phosphoribosylamine-glycine ligase activity"/>
    <property type="evidence" value="ECO:0007669"/>
    <property type="project" value="TreeGrafter"/>
</dbReference>
<dbReference type="GO" id="GO:0004641">
    <property type="term" value="F:phosphoribosylformylglycinamidine cyclo-ligase activity"/>
    <property type="evidence" value="ECO:0007669"/>
    <property type="project" value="UniProtKB-UniRule"/>
</dbReference>
<dbReference type="GO" id="GO:0006189">
    <property type="term" value="P:'de novo' IMP biosynthetic process"/>
    <property type="evidence" value="ECO:0007669"/>
    <property type="project" value="UniProtKB-UniRule"/>
</dbReference>
<dbReference type="GO" id="GO:0046084">
    <property type="term" value="P:adenine biosynthetic process"/>
    <property type="evidence" value="ECO:0007669"/>
    <property type="project" value="TreeGrafter"/>
</dbReference>
<dbReference type="CDD" id="cd02196">
    <property type="entry name" value="PurM"/>
    <property type="match status" value="1"/>
</dbReference>
<dbReference type="FunFam" id="3.30.1330.10:FF:000001">
    <property type="entry name" value="Phosphoribosylformylglycinamidine cyclo-ligase"/>
    <property type="match status" value="1"/>
</dbReference>
<dbReference type="FunFam" id="3.90.650.10:FF:000001">
    <property type="entry name" value="Phosphoribosylformylglycinamidine cyclo-ligase"/>
    <property type="match status" value="1"/>
</dbReference>
<dbReference type="Gene3D" id="3.90.650.10">
    <property type="entry name" value="PurM-like C-terminal domain"/>
    <property type="match status" value="1"/>
</dbReference>
<dbReference type="Gene3D" id="3.30.1330.10">
    <property type="entry name" value="PurM-like, N-terminal domain"/>
    <property type="match status" value="1"/>
</dbReference>
<dbReference type="HAMAP" id="MF_00741">
    <property type="entry name" value="AIRS"/>
    <property type="match status" value="1"/>
</dbReference>
<dbReference type="InterPro" id="IPR010918">
    <property type="entry name" value="PurM-like_C_dom"/>
</dbReference>
<dbReference type="InterPro" id="IPR036676">
    <property type="entry name" value="PurM-like_C_sf"/>
</dbReference>
<dbReference type="InterPro" id="IPR016188">
    <property type="entry name" value="PurM-like_N"/>
</dbReference>
<dbReference type="InterPro" id="IPR036921">
    <property type="entry name" value="PurM-like_N_sf"/>
</dbReference>
<dbReference type="InterPro" id="IPR004733">
    <property type="entry name" value="PurM_cligase"/>
</dbReference>
<dbReference type="NCBIfam" id="TIGR00878">
    <property type="entry name" value="purM"/>
    <property type="match status" value="1"/>
</dbReference>
<dbReference type="PANTHER" id="PTHR10520:SF12">
    <property type="entry name" value="TRIFUNCTIONAL PURINE BIOSYNTHETIC PROTEIN ADENOSINE-3"/>
    <property type="match status" value="1"/>
</dbReference>
<dbReference type="PANTHER" id="PTHR10520">
    <property type="entry name" value="TRIFUNCTIONAL PURINE BIOSYNTHETIC PROTEIN ADENOSINE-3-RELATED"/>
    <property type="match status" value="1"/>
</dbReference>
<dbReference type="Pfam" id="PF00586">
    <property type="entry name" value="AIRS"/>
    <property type="match status" value="1"/>
</dbReference>
<dbReference type="Pfam" id="PF02769">
    <property type="entry name" value="AIRS_C"/>
    <property type="match status" value="1"/>
</dbReference>
<dbReference type="SUPFAM" id="SSF56042">
    <property type="entry name" value="PurM C-terminal domain-like"/>
    <property type="match status" value="1"/>
</dbReference>
<dbReference type="SUPFAM" id="SSF55326">
    <property type="entry name" value="PurM N-terminal domain-like"/>
    <property type="match status" value="1"/>
</dbReference>
<evidence type="ECO:0000255" key="1">
    <source>
        <dbReference type="HAMAP-Rule" id="MF_00741"/>
    </source>
</evidence>
<name>PUR5_THEP3</name>
<feature type="chain" id="PRO_1000193052" description="Phosphoribosylformylglycinamidine cyclo-ligase">
    <location>
        <begin position="1"/>
        <end position="336"/>
    </location>
</feature>
<keyword id="KW-0067">ATP-binding</keyword>
<keyword id="KW-0963">Cytoplasm</keyword>
<keyword id="KW-0436">Ligase</keyword>
<keyword id="KW-0547">Nucleotide-binding</keyword>
<keyword id="KW-0658">Purine biosynthesis</keyword>
<keyword id="KW-1185">Reference proteome</keyword>
<gene>
    <name evidence="1" type="primary">purM</name>
    <name type="ordered locus">Teth39_1711</name>
</gene>
<protein>
    <recommendedName>
        <fullName evidence="1">Phosphoribosylformylglycinamidine cyclo-ligase</fullName>
        <ecNumber evidence="1">6.3.3.1</ecNumber>
    </recommendedName>
    <alternativeName>
        <fullName evidence="1">AIR synthase</fullName>
    </alternativeName>
    <alternativeName>
        <fullName evidence="1">AIRS</fullName>
    </alternativeName>
    <alternativeName>
        <fullName evidence="1">Phosphoribosyl-aminoimidazole synthetase</fullName>
    </alternativeName>
</protein>
<comment type="catalytic activity">
    <reaction evidence="1">
        <text>2-formamido-N(1)-(5-O-phospho-beta-D-ribosyl)acetamidine + ATP = 5-amino-1-(5-phospho-beta-D-ribosyl)imidazole + ADP + phosphate + H(+)</text>
        <dbReference type="Rhea" id="RHEA:23032"/>
        <dbReference type="ChEBI" id="CHEBI:15378"/>
        <dbReference type="ChEBI" id="CHEBI:30616"/>
        <dbReference type="ChEBI" id="CHEBI:43474"/>
        <dbReference type="ChEBI" id="CHEBI:137981"/>
        <dbReference type="ChEBI" id="CHEBI:147287"/>
        <dbReference type="ChEBI" id="CHEBI:456216"/>
        <dbReference type="EC" id="6.3.3.1"/>
    </reaction>
</comment>
<comment type="pathway">
    <text evidence="1">Purine metabolism; IMP biosynthesis via de novo pathway; 5-amino-1-(5-phospho-D-ribosyl)imidazole from N(2)-formyl-N(1)-(5-phospho-D-ribosyl)glycinamide: step 2/2.</text>
</comment>
<comment type="subcellular location">
    <subcellularLocation>
        <location evidence="1">Cytoplasm</location>
    </subcellularLocation>
</comment>
<comment type="similarity">
    <text evidence="1">Belongs to the AIR synthase family.</text>
</comment>
<reference key="1">
    <citation type="submission" date="2008-01" db="EMBL/GenBank/DDBJ databases">
        <title>Complete sequence of Thermoanaerobacter pseudethanolicus 39E.</title>
        <authorList>
            <person name="Copeland A."/>
            <person name="Lucas S."/>
            <person name="Lapidus A."/>
            <person name="Barry K."/>
            <person name="Glavina del Rio T."/>
            <person name="Dalin E."/>
            <person name="Tice H."/>
            <person name="Pitluck S."/>
            <person name="Bruce D."/>
            <person name="Goodwin L."/>
            <person name="Saunders E."/>
            <person name="Brettin T."/>
            <person name="Detter J.C."/>
            <person name="Han C."/>
            <person name="Schmutz J."/>
            <person name="Larimer F."/>
            <person name="Land M."/>
            <person name="Hauser L."/>
            <person name="Kyrpides N."/>
            <person name="Lykidis A."/>
            <person name="Hemme C."/>
            <person name="Fields M.W."/>
            <person name="He Z."/>
            <person name="Zhou J."/>
            <person name="Richardson P."/>
        </authorList>
    </citation>
    <scope>NUCLEOTIDE SEQUENCE [LARGE SCALE GENOMIC DNA]</scope>
    <source>
        <strain>ATCC 33223 / DSM 2355 / 39E</strain>
    </source>
</reference>